<reference key="1">
    <citation type="journal article" date="2001" name="Proc. Natl. Acad. Sci. U.S.A.">
        <title>Complete genome sequence of Caulobacter crescentus.</title>
        <authorList>
            <person name="Nierman W.C."/>
            <person name="Feldblyum T.V."/>
            <person name="Laub M.T."/>
            <person name="Paulsen I.T."/>
            <person name="Nelson K.E."/>
            <person name="Eisen J.A."/>
            <person name="Heidelberg J.F."/>
            <person name="Alley M.R.K."/>
            <person name="Ohta N."/>
            <person name="Maddock J.R."/>
            <person name="Potocka I."/>
            <person name="Nelson W.C."/>
            <person name="Newton A."/>
            <person name="Stephens C."/>
            <person name="Phadke N.D."/>
            <person name="Ely B."/>
            <person name="DeBoy R.T."/>
            <person name="Dodson R.J."/>
            <person name="Durkin A.S."/>
            <person name="Gwinn M.L."/>
            <person name="Haft D.H."/>
            <person name="Kolonay J.F."/>
            <person name="Smit J."/>
            <person name="Craven M.B."/>
            <person name="Khouri H.M."/>
            <person name="Shetty J."/>
            <person name="Berry K.J."/>
            <person name="Utterback T.R."/>
            <person name="Tran K."/>
            <person name="Wolf A.M."/>
            <person name="Vamathevan J.J."/>
            <person name="Ermolaeva M.D."/>
            <person name="White O."/>
            <person name="Salzberg S.L."/>
            <person name="Venter J.C."/>
            <person name="Shapiro L."/>
            <person name="Fraser C.M."/>
        </authorList>
    </citation>
    <scope>NUCLEOTIDE SEQUENCE [LARGE SCALE GENOMIC DNA]</scope>
    <source>
        <strain>ATCC 19089 / CIP 103742 / CB 15</strain>
    </source>
</reference>
<accession>Q9A262</accession>
<sequence length="819" mass="87842">MARAARRSTTELLWDAIRYGWAQPWTARFRGGIVTVVGAVLLLAIATYNATDPSFNAVTGEPASNALGGLGAAISDILMQSLGLSAWGIALLMLVFGVTRVAQADPDADRKDLRQRALVGALGLLALSAVLAAPPPPAIWQLEKGLGGFWGDSLLHMVAAVLSFAHIPGATIIAAILFGIAAIAALGFAIGVREVDPDAIHAAVSNALQPRARPEPEPEPAPAAKPVRARREKAEPAAPRAGRLPPLEADEDETPIAASQPAAAQRAYTPPPAVQDDEDDFEDSLDARPMAIAKPKTPVKESGREAREQQKAFDFEEDAGFQLPELAMLAKSKPRSSEVDAAALRQNARLLESVLAEFGVKGQIDQIRPGPVVTMYELVPAPGVKTARVVALADDIARSMSVISCRVAVAQGRNAIGIEMPNQRRETVYLRDLLSSADYEKASQILPMALGETIGGEPYIADLAKMPHLLIAGTTGSGKSVGVNAMILSILYKLPPEKCRFIMVDPKMLELSVYDGIPHLLAPVVTDPKKAVVALKWTVREMEDRYRRMSKIGVRNIGGYNEKANEAAAKGEHFERTVQTGFDDAGRPIYETEQIRPEPMPYLVVVIDEVADLMMVAGKDIEGAVQRLAQMARAAGIHLIMATQRPSVDVITGTIKANFPTRISFQVTSKIDARTILGEQGAEQLLGQGDMLYMAGGGRITRLHGPFVSDGEVEAVARFLRDQGIPQYLDEVTAGGDEEQEEAIEGAFSGEGGANDLYDHAVAVVTRDRKASTSYIQRRLQIGYNRAASLMERMEKEGVVGAANHAGKREILAPPTPPL</sequence>
<dbReference type="EMBL" id="AE005673">
    <property type="protein sequence ID" value="AAK25666.1"/>
    <property type="molecule type" value="Genomic_DNA"/>
</dbReference>
<dbReference type="PIR" id="F87708">
    <property type="entry name" value="F87708"/>
</dbReference>
<dbReference type="RefSeq" id="NP_422498.1">
    <property type="nucleotide sequence ID" value="NC_002696.2"/>
</dbReference>
<dbReference type="SMR" id="Q9A262"/>
<dbReference type="STRING" id="190650.CC_3704"/>
<dbReference type="EnsemblBacteria" id="AAK25666">
    <property type="protein sequence ID" value="AAK25666"/>
    <property type="gene ID" value="CC_3704"/>
</dbReference>
<dbReference type="KEGG" id="ccr:CC_3704"/>
<dbReference type="PATRIC" id="fig|190650.5.peg.3705"/>
<dbReference type="eggNOG" id="COG1674">
    <property type="taxonomic scope" value="Bacteria"/>
</dbReference>
<dbReference type="HOGENOM" id="CLU_001981_6_2_5"/>
<dbReference type="BioCyc" id="CAULO:CC3704-MONOMER"/>
<dbReference type="Proteomes" id="UP000001816">
    <property type="component" value="Chromosome"/>
</dbReference>
<dbReference type="GO" id="GO:0005886">
    <property type="term" value="C:plasma membrane"/>
    <property type="evidence" value="ECO:0007669"/>
    <property type="project" value="UniProtKB-SubCell"/>
</dbReference>
<dbReference type="GO" id="GO:0005524">
    <property type="term" value="F:ATP binding"/>
    <property type="evidence" value="ECO:0007669"/>
    <property type="project" value="UniProtKB-KW"/>
</dbReference>
<dbReference type="GO" id="GO:0003677">
    <property type="term" value="F:DNA binding"/>
    <property type="evidence" value="ECO:0007669"/>
    <property type="project" value="UniProtKB-KW"/>
</dbReference>
<dbReference type="GO" id="GO:0051301">
    <property type="term" value="P:cell division"/>
    <property type="evidence" value="ECO:0007669"/>
    <property type="project" value="UniProtKB-KW"/>
</dbReference>
<dbReference type="GO" id="GO:0007059">
    <property type="term" value="P:chromosome segregation"/>
    <property type="evidence" value="ECO:0007669"/>
    <property type="project" value="UniProtKB-KW"/>
</dbReference>
<dbReference type="CDD" id="cd01127">
    <property type="entry name" value="TrwB_TraG_TraD_VirD4"/>
    <property type="match status" value="1"/>
</dbReference>
<dbReference type="Gene3D" id="3.30.980.40">
    <property type="match status" value="1"/>
</dbReference>
<dbReference type="Gene3D" id="3.40.50.300">
    <property type="entry name" value="P-loop containing nucleotide triphosphate hydrolases"/>
    <property type="match status" value="1"/>
</dbReference>
<dbReference type="Gene3D" id="1.10.10.10">
    <property type="entry name" value="Winged helix-like DNA-binding domain superfamily/Winged helix DNA-binding domain"/>
    <property type="match status" value="1"/>
</dbReference>
<dbReference type="InterPro" id="IPR050206">
    <property type="entry name" value="FtsK/SpoIIIE/SftA"/>
</dbReference>
<dbReference type="InterPro" id="IPR025199">
    <property type="entry name" value="FtsK_4TM"/>
</dbReference>
<dbReference type="InterPro" id="IPR041027">
    <property type="entry name" value="FtsK_alpha"/>
</dbReference>
<dbReference type="InterPro" id="IPR002543">
    <property type="entry name" value="FtsK_dom"/>
</dbReference>
<dbReference type="InterPro" id="IPR018541">
    <property type="entry name" value="Ftsk_gamma"/>
</dbReference>
<dbReference type="InterPro" id="IPR027417">
    <property type="entry name" value="P-loop_NTPase"/>
</dbReference>
<dbReference type="InterPro" id="IPR036388">
    <property type="entry name" value="WH-like_DNA-bd_sf"/>
</dbReference>
<dbReference type="InterPro" id="IPR036390">
    <property type="entry name" value="WH_DNA-bd_sf"/>
</dbReference>
<dbReference type="PANTHER" id="PTHR22683:SF41">
    <property type="entry name" value="DNA TRANSLOCASE FTSK"/>
    <property type="match status" value="1"/>
</dbReference>
<dbReference type="PANTHER" id="PTHR22683">
    <property type="entry name" value="SPORULATION PROTEIN RELATED"/>
    <property type="match status" value="1"/>
</dbReference>
<dbReference type="Pfam" id="PF13491">
    <property type="entry name" value="FtsK_4TM"/>
    <property type="match status" value="1"/>
</dbReference>
<dbReference type="Pfam" id="PF17854">
    <property type="entry name" value="FtsK_alpha"/>
    <property type="match status" value="1"/>
</dbReference>
<dbReference type="Pfam" id="PF09397">
    <property type="entry name" value="FtsK_gamma"/>
    <property type="match status" value="1"/>
</dbReference>
<dbReference type="Pfam" id="PF01580">
    <property type="entry name" value="FtsK_SpoIIIE"/>
    <property type="match status" value="1"/>
</dbReference>
<dbReference type="SMART" id="SM00843">
    <property type="entry name" value="Ftsk_gamma"/>
    <property type="match status" value="1"/>
</dbReference>
<dbReference type="SUPFAM" id="SSF52540">
    <property type="entry name" value="P-loop containing nucleoside triphosphate hydrolases"/>
    <property type="match status" value="1"/>
</dbReference>
<dbReference type="SUPFAM" id="SSF46785">
    <property type="entry name" value="Winged helix' DNA-binding domain"/>
    <property type="match status" value="1"/>
</dbReference>
<dbReference type="PROSITE" id="PS50901">
    <property type="entry name" value="FTSK"/>
    <property type="match status" value="1"/>
</dbReference>
<keyword id="KW-0067">ATP-binding</keyword>
<keyword id="KW-0131">Cell cycle</keyword>
<keyword id="KW-0132">Cell division</keyword>
<keyword id="KW-0997">Cell inner membrane</keyword>
<keyword id="KW-1003">Cell membrane</keyword>
<keyword id="KW-0159">Chromosome partition</keyword>
<keyword id="KW-0238">DNA-binding</keyword>
<keyword id="KW-0472">Membrane</keyword>
<keyword id="KW-0547">Nucleotide-binding</keyword>
<keyword id="KW-1185">Reference proteome</keyword>
<keyword id="KW-0812">Transmembrane</keyword>
<keyword id="KW-1133">Transmembrane helix</keyword>
<feature type="chain" id="PRO_0000098246" description="DNA translocase FtsK">
    <location>
        <begin position="1"/>
        <end position="819"/>
    </location>
</feature>
<feature type="transmembrane region" description="Helical" evidence="2">
    <location>
        <begin position="31"/>
        <end position="51"/>
    </location>
</feature>
<feature type="transmembrane region" description="Helical" evidence="2">
    <location>
        <begin position="77"/>
        <end position="97"/>
    </location>
</feature>
<feature type="transmembrane region" description="Helical" evidence="2">
    <location>
        <begin position="119"/>
        <end position="139"/>
    </location>
</feature>
<feature type="transmembrane region" description="Helical" evidence="2">
    <location>
        <begin position="145"/>
        <end position="165"/>
    </location>
</feature>
<feature type="transmembrane region" description="Helical" evidence="2">
    <location>
        <begin position="172"/>
        <end position="192"/>
    </location>
</feature>
<feature type="topological domain" description="Cytoplasmic" evidence="2">
    <location>
        <begin position="193"/>
        <end position="819"/>
    </location>
</feature>
<feature type="domain" description="FtsK" evidence="3">
    <location>
        <begin position="456"/>
        <end position="674"/>
    </location>
</feature>
<feature type="region of interest" description="Disordered" evidence="4">
    <location>
        <begin position="207"/>
        <end position="309"/>
    </location>
</feature>
<feature type="compositionally biased region" description="Low complexity" evidence="4">
    <location>
        <begin position="236"/>
        <end position="247"/>
    </location>
</feature>
<feature type="compositionally biased region" description="Low complexity" evidence="4">
    <location>
        <begin position="257"/>
        <end position="267"/>
    </location>
</feature>
<feature type="compositionally biased region" description="Acidic residues" evidence="4">
    <location>
        <begin position="275"/>
        <end position="284"/>
    </location>
</feature>
<feature type="compositionally biased region" description="Basic and acidic residues" evidence="4">
    <location>
        <begin position="298"/>
        <end position="309"/>
    </location>
</feature>
<feature type="binding site" evidence="3">
    <location>
        <begin position="476"/>
        <end position="481"/>
    </location>
    <ligand>
        <name>ATP</name>
        <dbReference type="ChEBI" id="CHEBI:30616"/>
    </ligand>
</feature>
<proteinExistence type="inferred from homology"/>
<protein>
    <recommendedName>
        <fullName>DNA translocase FtsK</fullName>
    </recommendedName>
</protein>
<organism>
    <name type="scientific">Caulobacter vibrioides (strain ATCC 19089 / CIP 103742 / CB 15)</name>
    <name type="common">Caulobacter crescentus</name>
    <dbReference type="NCBI Taxonomy" id="190650"/>
    <lineage>
        <taxon>Bacteria</taxon>
        <taxon>Pseudomonadati</taxon>
        <taxon>Pseudomonadota</taxon>
        <taxon>Alphaproteobacteria</taxon>
        <taxon>Caulobacterales</taxon>
        <taxon>Caulobacteraceae</taxon>
        <taxon>Caulobacter</taxon>
    </lineage>
</organism>
<evidence type="ECO:0000250" key="1"/>
<evidence type="ECO:0000255" key="2"/>
<evidence type="ECO:0000255" key="3">
    <source>
        <dbReference type="PROSITE-ProRule" id="PRU00289"/>
    </source>
</evidence>
<evidence type="ECO:0000256" key="4">
    <source>
        <dbReference type="SAM" id="MobiDB-lite"/>
    </source>
</evidence>
<evidence type="ECO:0000305" key="5"/>
<comment type="function">
    <text evidence="1">Essential cell division protein that coordinates cell division and chromosome segregation. The N-terminus is involved in assembly of the cell-division machinery. The C-terminus functions as a DNA motor that moves dsDNA in an ATP-dependent manner towards the dif recombination site, which is located within the replication terminus region. Translocation stops specifically at Xer-dif sites, where FtsK interacts with the Xer recombinase, allowing activation of chromosome unlinking by recombination. FtsK orienting polar sequences (KOPS) guide the direction of DNA translocation. FtsK can remove proteins from DNA as it translocates, but translocation stops specifically at XerCD-dif site, thereby preventing removal of XerC and XerD from dif (By similarity).</text>
</comment>
<comment type="subunit">
    <text evidence="1">Homohexamer. Forms a ring that surrounds DNA (By similarity).</text>
</comment>
<comment type="subcellular location">
    <subcellularLocation>
        <location evidence="1">Cell inner membrane</location>
        <topology evidence="1">Multi-pass membrane protein</topology>
    </subcellularLocation>
    <text evidence="1">Located at the septum.</text>
</comment>
<comment type="domain">
    <text evidence="1">Consists of an N-terminal domain, which is sufficient for the localization to the septal ring and is required for cell division, followed by a linker domain, and a C-terminal domain, which forms the translocation motor involved in chromosome segregation. The C-terminal domain can be further subdivided into alpha, beta and gamma subdomains. The alpha and beta subdomains multimerise to produce a hexameric ring, contain the nucleotide binding motif and form the DNA pump. The gamma subdomain is a regulatory subdomain that controls translocation of DNA by recognition of KOPS motifs and interacts with XerD recombinase (By similarity).</text>
</comment>
<comment type="similarity">
    <text evidence="5">Belongs to the FtsK/SpoIIIE/SftA family.</text>
</comment>
<gene>
    <name type="primary">ftsK</name>
    <name type="ordered locus">CC_3704</name>
</gene>
<name>FTSK_CAUVC</name>